<proteinExistence type="inferred from homology"/>
<accession>B4SUR8</accession>
<feature type="chain" id="PRO_1000141137" description="Small ribosomal subunit protein uS11">
    <location>
        <begin position="1"/>
        <end position="129"/>
    </location>
</feature>
<organism>
    <name type="scientific">Salmonella newport (strain SL254)</name>
    <dbReference type="NCBI Taxonomy" id="423368"/>
    <lineage>
        <taxon>Bacteria</taxon>
        <taxon>Pseudomonadati</taxon>
        <taxon>Pseudomonadota</taxon>
        <taxon>Gammaproteobacteria</taxon>
        <taxon>Enterobacterales</taxon>
        <taxon>Enterobacteriaceae</taxon>
        <taxon>Salmonella</taxon>
    </lineage>
</organism>
<sequence>MAKAPVRARKRVRKQVSDGVAHIHASFNNTIVTITDRQGNALGWATAGGSGFRGSRKSTPFAAQVAAERCADAVKEYGIKNLEVMVKGPGPGRESTIRALNAAGFRITNITDVTPIPHNGCRPPKKRRV</sequence>
<keyword id="KW-0687">Ribonucleoprotein</keyword>
<keyword id="KW-0689">Ribosomal protein</keyword>
<keyword id="KW-0694">RNA-binding</keyword>
<keyword id="KW-0699">rRNA-binding</keyword>
<comment type="function">
    <text evidence="1">Located on the platform of the 30S subunit, it bridges several disparate RNA helices of the 16S rRNA. Forms part of the Shine-Dalgarno cleft in the 70S ribosome.</text>
</comment>
<comment type="subunit">
    <text evidence="1">Part of the 30S ribosomal subunit. Interacts with proteins S7 and S18. Binds to IF-3.</text>
</comment>
<comment type="similarity">
    <text evidence="1">Belongs to the universal ribosomal protein uS11 family.</text>
</comment>
<protein>
    <recommendedName>
        <fullName evidence="1">Small ribosomal subunit protein uS11</fullName>
    </recommendedName>
    <alternativeName>
        <fullName evidence="2">30S ribosomal protein S11</fullName>
    </alternativeName>
</protein>
<name>RS11_SALNS</name>
<dbReference type="EMBL" id="CP001113">
    <property type="protein sequence ID" value="ACF62358.1"/>
    <property type="molecule type" value="Genomic_DNA"/>
</dbReference>
<dbReference type="RefSeq" id="WP_001029758.1">
    <property type="nucleotide sequence ID" value="NZ_CCMR01000003.1"/>
</dbReference>
<dbReference type="SMR" id="B4SUR8"/>
<dbReference type="GeneID" id="98390419"/>
<dbReference type="KEGG" id="see:SNSL254_A3685"/>
<dbReference type="HOGENOM" id="CLU_072439_5_0_6"/>
<dbReference type="Proteomes" id="UP000008824">
    <property type="component" value="Chromosome"/>
</dbReference>
<dbReference type="GO" id="GO:1990904">
    <property type="term" value="C:ribonucleoprotein complex"/>
    <property type="evidence" value="ECO:0007669"/>
    <property type="project" value="UniProtKB-KW"/>
</dbReference>
<dbReference type="GO" id="GO:0005840">
    <property type="term" value="C:ribosome"/>
    <property type="evidence" value="ECO:0007669"/>
    <property type="project" value="UniProtKB-KW"/>
</dbReference>
<dbReference type="GO" id="GO:0019843">
    <property type="term" value="F:rRNA binding"/>
    <property type="evidence" value="ECO:0007669"/>
    <property type="project" value="UniProtKB-UniRule"/>
</dbReference>
<dbReference type="GO" id="GO:0003735">
    <property type="term" value="F:structural constituent of ribosome"/>
    <property type="evidence" value="ECO:0007669"/>
    <property type="project" value="InterPro"/>
</dbReference>
<dbReference type="GO" id="GO:0006412">
    <property type="term" value="P:translation"/>
    <property type="evidence" value="ECO:0007669"/>
    <property type="project" value="UniProtKB-UniRule"/>
</dbReference>
<dbReference type="FunFam" id="3.30.420.80:FF:000001">
    <property type="entry name" value="30S ribosomal protein S11"/>
    <property type="match status" value="1"/>
</dbReference>
<dbReference type="Gene3D" id="3.30.420.80">
    <property type="entry name" value="Ribosomal protein S11"/>
    <property type="match status" value="1"/>
</dbReference>
<dbReference type="HAMAP" id="MF_01310">
    <property type="entry name" value="Ribosomal_uS11"/>
    <property type="match status" value="1"/>
</dbReference>
<dbReference type="InterPro" id="IPR001971">
    <property type="entry name" value="Ribosomal_uS11"/>
</dbReference>
<dbReference type="InterPro" id="IPR019981">
    <property type="entry name" value="Ribosomal_uS11_bac-type"/>
</dbReference>
<dbReference type="InterPro" id="IPR018102">
    <property type="entry name" value="Ribosomal_uS11_CS"/>
</dbReference>
<dbReference type="InterPro" id="IPR036967">
    <property type="entry name" value="Ribosomal_uS11_sf"/>
</dbReference>
<dbReference type="NCBIfam" id="NF003698">
    <property type="entry name" value="PRK05309.1"/>
    <property type="match status" value="1"/>
</dbReference>
<dbReference type="NCBIfam" id="TIGR03632">
    <property type="entry name" value="uS11_bact"/>
    <property type="match status" value="1"/>
</dbReference>
<dbReference type="PANTHER" id="PTHR11759">
    <property type="entry name" value="40S RIBOSOMAL PROTEIN S14/30S RIBOSOMAL PROTEIN S11"/>
    <property type="match status" value="1"/>
</dbReference>
<dbReference type="Pfam" id="PF00411">
    <property type="entry name" value="Ribosomal_S11"/>
    <property type="match status" value="1"/>
</dbReference>
<dbReference type="PIRSF" id="PIRSF002131">
    <property type="entry name" value="Ribosomal_S11"/>
    <property type="match status" value="1"/>
</dbReference>
<dbReference type="SUPFAM" id="SSF53137">
    <property type="entry name" value="Translational machinery components"/>
    <property type="match status" value="1"/>
</dbReference>
<dbReference type="PROSITE" id="PS00054">
    <property type="entry name" value="RIBOSOMAL_S11"/>
    <property type="match status" value="1"/>
</dbReference>
<evidence type="ECO:0000255" key="1">
    <source>
        <dbReference type="HAMAP-Rule" id="MF_01310"/>
    </source>
</evidence>
<evidence type="ECO:0000305" key="2"/>
<gene>
    <name evidence="1" type="primary">rpsK</name>
    <name type="ordered locus">SNSL254_A3685</name>
</gene>
<reference key="1">
    <citation type="journal article" date="2011" name="J. Bacteriol.">
        <title>Comparative genomics of 28 Salmonella enterica isolates: evidence for CRISPR-mediated adaptive sublineage evolution.</title>
        <authorList>
            <person name="Fricke W.F."/>
            <person name="Mammel M.K."/>
            <person name="McDermott P.F."/>
            <person name="Tartera C."/>
            <person name="White D.G."/>
            <person name="Leclerc J.E."/>
            <person name="Ravel J."/>
            <person name="Cebula T.A."/>
        </authorList>
    </citation>
    <scope>NUCLEOTIDE SEQUENCE [LARGE SCALE GENOMIC DNA]</scope>
    <source>
        <strain>SL254</strain>
    </source>
</reference>